<accession>O78494</accession>
<evidence type="ECO:0000250" key="1"/>
<evidence type="ECO:0000255" key="2"/>
<evidence type="ECO:0000305" key="3"/>
<feature type="signal peptide" evidence="1">
    <location>
        <begin position="1"/>
        <end position="38"/>
    </location>
</feature>
<feature type="chain" id="PRO_0000023815" description="Cytochrome f">
    <location>
        <begin position="39"/>
        <end position="321"/>
    </location>
</feature>
<feature type="transmembrane region" description="Helical" evidence="2">
    <location>
        <begin position="287"/>
        <end position="306"/>
    </location>
</feature>
<feature type="binding site" description="axial binding residue" evidence="1">
    <location>
        <position position="39"/>
    </location>
    <ligand>
        <name>heme</name>
        <dbReference type="ChEBI" id="CHEBI:30413"/>
    </ligand>
    <ligandPart>
        <name>Fe</name>
        <dbReference type="ChEBI" id="CHEBI:18248"/>
    </ligandPart>
</feature>
<feature type="binding site" description="covalent" evidence="1">
    <location>
        <position position="59"/>
    </location>
    <ligand>
        <name>heme</name>
        <dbReference type="ChEBI" id="CHEBI:30413"/>
    </ligand>
</feature>
<feature type="binding site" description="covalent" evidence="1">
    <location>
        <position position="62"/>
    </location>
    <ligand>
        <name>heme</name>
        <dbReference type="ChEBI" id="CHEBI:30413"/>
    </ligand>
</feature>
<feature type="binding site" description="axial binding residue" evidence="1">
    <location>
        <position position="63"/>
    </location>
    <ligand>
        <name>heme</name>
        <dbReference type="ChEBI" id="CHEBI:30413"/>
    </ligand>
    <ligandPart>
        <name>Fe</name>
        <dbReference type="ChEBI" id="CHEBI:18248"/>
    </ligandPart>
</feature>
<comment type="function">
    <text evidence="1">Component of the cytochrome b6-f complex, which mediates electron transfer between photosystem II (PSII) and photosystem I (PSI), cyclic electron flow around PSI, and state transitions.</text>
</comment>
<comment type="cofactor">
    <cofactor evidence="1">
        <name>heme</name>
        <dbReference type="ChEBI" id="CHEBI:30413"/>
    </cofactor>
    <text evidence="1">Binds 1 heme group covalently.</text>
</comment>
<comment type="subunit">
    <text evidence="1">The 4 large subunits of the cytochrome b6-f complex are cytochrome b6, subunit IV (17 kDa polypeptide, petD), cytochrome f and the Rieske protein, while the 4 small subunits are PetG, PetL, PetM and PetN. The complex functions as a dimer (By similarity).</text>
</comment>
<comment type="subcellular location">
    <subcellularLocation>
        <location evidence="1">Plastid</location>
        <location evidence="1">Chloroplast thylakoid membrane</location>
        <topology evidence="1">Single-pass membrane protein</topology>
    </subcellularLocation>
</comment>
<comment type="similarity">
    <text evidence="3">Belongs to the cytochrome f family.</text>
</comment>
<organism>
    <name type="scientific">Guillardia theta</name>
    <name type="common">Cryptophyte</name>
    <name type="synonym">Cryptomonas phi</name>
    <dbReference type="NCBI Taxonomy" id="55529"/>
    <lineage>
        <taxon>Eukaryota</taxon>
        <taxon>Cryptophyceae</taxon>
        <taxon>Pyrenomonadales</taxon>
        <taxon>Geminigeraceae</taxon>
        <taxon>Guillardia</taxon>
    </lineage>
</organism>
<geneLocation type="chloroplast"/>
<name>CYF_GUITH</name>
<protein>
    <recommendedName>
        <fullName>Cytochrome f</fullName>
    </recommendedName>
</protein>
<dbReference type="EMBL" id="AF041468">
    <property type="protein sequence ID" value="AAC35685.1"/>
    <property type="molecule type" value="Genomic_DNA"/>
</dbReference>
<dbReference type="RefSeq" id="NP_050751.1">
    <property type="nucleotide sequence ID" value="NC_000926.1"/>
</dbReference>
<dbReference type="SMR" id="O78494"/>
<dbReference type="GeneID" id="857056"/>
<dbReference type="HOGENOM" id="CLU_033498_0_0_1"/>
<dbReference type="OMA" id="PFWAQQN"/>
<dbReference type="GO" id="GO:0009535">
    <property type="term" value="C:chloroplast thylakoid membrane"/>
    <property type="evidence" value="ECO:0007669"/>
    <property type="project" value="UniProtKB-SubCell"/>
</dbReference>
<dbReference type="GO" id="GO:0009055">
    <property type="term" value="F:electron transfer activity"/>
    <property type="evidence" value="ECO:0007669"/>
    <property type="project" value="UniProtKB-UniRule"/>
</dbReference>
<dbReference type="GO" id="GO:0020037">
    <property type="term" value="F:heme binding"/>
    <property type="evidence" value="ECO:0007669"/>
    <property type="project" value="InterPro"/>
</dbReference>
<dbReference type="GO" id="GO:0005506">
    <property type="term" value="F:iron ion binding"/>
    <property type="evidence" value="ECO:0007669"/>
    <property type="project" value="InterPro"/>
</dbReference>
<dbReference type="GO" id="GO:0015979">
    <property type="term" value="P:photosynthesis"/>
    <property type="evidence" value="ECO:0007669"/>
    <property type="project" value="UniProtKB-UniRule"/>
</dbReference>
<dbReference type="FunFam" id="1.20.5.700:FF:000001">
    <property type="entry name" value="Cytochrome f"/>
    <property type="match status" value="1"/>
</dbReference>
<dbReference type="FunFam" id="2.60.40.830:FF:000001">
    <property type="entry name" value="Cytochrome f"/>
    <property type="match status" value="1"/>
</dbReference>
<dbReference type="Gene3D" id="2.40.50.100">
    <property type="match status" value="1"/>
</dbReference>
<dbReference type="Gene3D" id="2.60.40.830">
    <property type="entry name" value="Cytochrome f large domain"/>
    <property type="match status" value="1"/>
</dbReference>
<dbReference type="Gene3D" id="1.20.5.700">
    <property type="entry name" value="Single helix bin"/>
    <property type="match status" value="1"/>
</dbReference>
<dbReference type="HAMAP" id="MF_00610">
    <property type="entry name" value="Cytb6_f_cytF"/>
    <property type="match status" value="1"/>
</dbReference>
<dbReference type="InterPro" id="IPR024058">
    <property type="entry name" value="Cyt-f_TM"/>
</dbReference>
<dbReference type="InterPro" id="IPR002325">
    <property type="entry name" value="Cyt_f"/>
</dbReference>
<dbReference type="InterPro" id="IPR024094">
    <property type="entry name" value="Cyt_f_lg_dom"/>
</dbReference>
<dbReference type="InterPro" id="IPR036826">
    <property type="entry name" value="Cyt_f_lg_dom_sf"/>
</dbReference>
<dbReference type="InterPro" id="IPR011054">
    <property type="entry name" value="Rudment_hybrid_motif"/>
</dbReference>
<dbReference type="PANTHER" id="PTHR33288">
    <property type="match status" value="1"/>
</dbReference>
<dbReference type="PANTHER" id="PTHR33288:SF10">
    <property type="entry name" value="CYTOCHROME F"/>
    <property type="match status" value="1"/>
</dbReference>
<dbReference type="Pfam" id="PF01333">
    <property type="entry name" value="Apocytochr_F_C"/>
    <property type="match status" value="1"/>
</dbReference>
<dbReference type="Pfam" id="PF16639">
    <property type="entry name" value="Apocytochr_F_N"/>
    <property type="match status" value="1"/>
</dbReference>
<dbReference type="PRINTS" id="PR00610">
    <property type="entry name" value="CYTOCHROMEF"/>
</dbReference>
<dbReference type="SUPFAM" id="SSF103431">
    <property type="entry name" value="Cytochrome f subunit of the cytochrome b6f complex, transmembrane anchor"/>
    <property type="match status" value="1"/>
</dbReference>
<dbReference type="SUPFAM" id="SSF49441">
    <property type="entry name" value="Cytochrome f, large domain"/>
    <property type="match status" value="1"/>
</dbReference>
<dbReference type="SUPFAM" id="SSF51246">
    <property type="entry name" value="Rudiment single hybrid motif"/>
    <property type="match status" value="1"/>
</dbReference>
<dbReference type="PROSITE" id="PS51010">
    <property type="entry name" value="CYTF"/>
    <property type="match status" value="1"/>
</dbReference>
<keyword id="KW-0150">Chloroplast</keyword>
<keyword id="KW-0249">Electron transport</keyword>
<keyword id="KW-0349">Heme</keyword>
<keyword id="KW-0408">Iron</keyword>
<keyword id="KW-0472">Membrane</keyword>
<keyword id="KW-0479">Metal-binding</keyword>
<keyword id="KW-0602">Photosynthesis</keyword>
<keyword id="KW-0934">Plastid</keyword>
<keyword id="KW-0732">Signal</keyword>
<keyword id="KW-0793">Thylakoid</keyword>
<keyword id="KW-0812">Transmembrane</keyword>
<keyword id="KW-1133">Transmembrane helix</keyword>
<keyword id="KW-0813">Transport</keyword>
<gene>
    <name type="primary">petA</name>
</gene>
<proteinExistence type="inferred from homology"/>
<sequence length="321" mass="35173">MINLFLLKYKTAFSTFLKPFAYLSLILSVCFYSIQAQAFPVFAQQAYENPREATGRIVCANCHLAQKPVEIEVPQAVLPDTVFEAVVEVPYDLSLQQVTGNGTKGPLNVGAVVILPEGFTLAPKDRISSELKEKTKGLIITPYNEANPNILVVGPVPGKDHQKLVFPVLSPNPAENKNVHFIKYPVYVGANRGRGQVNPTGEKSNNTVYTSPIDGQIVKLEKSDNVTSFSIKSKTGDIITVKVPFGPDILVKEGQTLVADQQLTNDPNVGGFGQVETEIVLQSPARVKGLIAFFFTVILAQILLVLKKKQFEKVQLAEMNF</sequence>
<reference key="1">
    <citation type="journal article" date="1999" name="J. Mol. Evol.">
        <title>The plastid genome of the cryptophyte alga, Guillardia theta: complete sequence and conserved synteny groups confirm its common ancestry with red algae.</title>
        <authorList>
            <person name="Douglas S.E."/>
            <person name="Penny S.L."/>
        </authorList>
    </citation>
    <scope>NUCLEOTIDE SEQUENCE [LARGE SCALE GENOMIC DNA]</scope>
</reference>